<protein>
    <recommendedName>
        <fullName>Putative phosphatidate phosphatase</fullName>
        <ecNumber>3.1.3.4</ecNumber>
    </recommendedName>
    <alternativeName>
        <fullName>Germ cell guidance factor</fullName>
    </alternativeName>
    <alternativeName>
        <fullName>Phosphatidic acid phosphatase type 2</fullName>
    </alternativeName>
    <alternativeName>
        <fullName>Protein wunen</fullName>
    </alternativeName>
</protein>
<reference evidence="8" key="1">
    <citation type="journal article" date="1997" name="Nature">
        <title>The Drosophila protein Wunen repels migrating germ cells.</title>
        <authorList>
            <person name="Zhang N."/>
            <person name="Zhang J.P."/>
            <person name="Purcell K.J."/>
            <person name="Chen Y."/>
            <person name="Howard K."/>
        </authorList>
    </citation>
    <scope>NUCLEOTIDE SEQUENCE [MRNA] (ISOFORM SHORT)</scope>
    <scope>FUNCTION</scope>
    <scope>TISSUE SPECIFICITY</scope>
</reference>
<reference evidence="8" key="2">
    <citation type="journal article" date="2000" name="Science">
        <title>The genome sequence of Drosophila melanogaster.</title>
        <authorList>
            <person name="Adams M.D."/>
            <person name="Celniker S.E."/>
            <person name="Holt R.A."/>
            <person name="Evans C.A."/>
            <person name="Gocayne J.D."/>
            <person name="Amanatides P.G."/>
            <person name="Scherer S.E."/>
            <person name="Li P.W."/>
            <person name="Hoskins R.A."/>
            <person name="Galle R.F."/>
            <person name="George R.A."/>
            <person name="Lewis S.E."/>
            <person name="Richards S."/>
            <person name="Ashburner M."/>
            <person name="Henderson S.N."/>
            <person name="Sutton G.G."/>
            <person name="Wortman J.R."/>
            <person name="Yandell M.D."/>
            <person name="Zhang Q."/>
            <person name="Chen L.X."/>
            <person name="Brandon R.C."/>
            <person name="Rogers Y.-H.C."/>
            <person name="Blazej R.G."/>
            <person name="Champe M."/>
            <person name="Pfeiffer B.D."/>
            <person name="Wan K.H."/>
            <person name="Doyle C."/>
            <person name="Baxter E.G."/>
            <person name="Helt G."/>
            <person name="Nelson C.R."/>
            <person name="Miklos G.L.G."/>
            <person name="Abril J.F."/>
            <person name="Agbayani A."/>
            <person name="An H.-J."/>
            <person name="Andrews-Pfannkoch C."/>
            <person name="Baldwin D."/>
            <person name="Ballew R.M."/>
            <person name="Basu A."/>
            <person name="Baxendale J."/>
            <person name="Bayraktaroglu L."/>
            <person name="Beasley E.M."/>
            <person name="Beeson K.Y."/>
            <person name="Benos P.V."/>
            <person name="Berman B.P."/>
            <person name="Bhandari D."/>
            <person name="Bolshakov S."/>
            <person name="Borkova D."/>
            <person name="Botchan M.R."/>
            <person name="Bouck J."/>
            <person name="Brokstein P."/>
            <person name="Brottier P."/>
            <person name="Burtis K.C."/>
            <person name="Busam D.A."/>
            <person name="Butler H."/>
            <person name="Cadieu E."/>
            <person name="Center A."/>
            <person name="Chandra I."/>
            <person name="Cherry J.M."/>
            <person name="Cawley S."/>
            <person name="Dahlke C."/>
            <person name="Davenport L.B."/>
            <person name="Davies P."/>
            <person name="de Pablos B."/>
            <person name="Delcher A."/>
            <person name="Deng Z."/>
            <person name="Mays A.D."/>
            <person name="Dew I."/>
            <person name="Dietz S.M."/>
            <person name="Dodson K."/>
            <person name="Doup L.E."/>
            <person name="Downes M."/>
            <person name="Dugan-Rocha S."/>
            <person name="Dunkov B.C."/>
            <person name="Dunn P."/>
            <person name="Durbin K.J."/>
            <person name="Evangelista C.C."/>
            <person name="Ferraz C."/>
            <person name="Ferriera S."/>
            <person name="Fleischmann W."/>
            <person name="Fosler C."/>
            <person name="Gabrielian A.E."/>
            <person name="Garg N.S."/>
            <person name="Gelbart W.M."/>
            <person name="Glasser K."/>
            <person name="Glodek A."/>
            <person name="Gong F."/>
            <person name="Gorrell J.H."/>
            <person name="Gu Z."/>
            <person name="Guan P."/>
            <person name="Harris M."/>
            <person name="Harris N.L."/>
            <person name="Harvey D.A."/>
            <person name="Heiman T.J."/>
            <person name="Hernandez J.R."/>
            <person name="Houck J."/>
            <person name="Hostin D."/>
            <person name="Houston K.A."/>
            <person name="Howland T.J."/>
            <person name="Wei M.-H."/>
            <person name="Ibegwam C."/>
            <person name="Jalali M."/>
            <person name="Kalush F."/>
            <person name="Karpen G.H."/>
            <person name="Ke Z."/>
            <person name="Kennison J.A."/>
            <person name="Ketchum K.A."/>
            <person name="Kimmel B.E."/>
            <person name="Kodira C.D."/>
            <person name="Kraft C.L."/>
            <person name="Kravitz S."/>
            <person name="Kulp D."/>
            <person name="Lai Z."/>
            <person name="Lasko P."/>
            <person name="Lei Y."/>
            <person name="Levitsky A.A."/>
            <person name="Li J.H."/>
            <person name="Li Z."/>
            <person name="Liang Y."/>
            <person name="Lin X."/>
            <person name="Liu X."/>
            <person name="Mattei B."/>
            <person name="McIntosh T.C."/>
            <person name="McLeod M.P."/>
            <person name="McPherson D."/>
            <person name="Merkulov G."/>
            <person name="Milshina N.V."/>
            <person name="Mobarry C."/>
            <person name="Morris J."/>
            <person name="Moshrefi A."/>
            <person name="Mount S.M."/>
            <person name="Moy M."/>
            <person name="Murphy B."/>
            <person name="Murphy L."/>
            <person name="Muzny D.M."/>
            <person name="Nelson D.L."/>
            <person name="Nelson D.R."/>
            <person name="Nelson K.A."/>
            <person name="Nixon K."/>
            <person name="Nusskern D.R."/>
            <person name="Pacleb J.M."/>
            <person name="Palazzolo M."/>
            <person name="Pittman G.S."/>
            <person name="Pan S."/>
            <person name="Pollard J."/>
            <person name="Puri V."/>
            <person name="Reese M.G."/>
            <person name="Reinert K."/>
            <person name="Remington K."/>
            <person name="Saunders R.D.C."/>
            <person name="Scheeler F."/>
            <person name="Shen H."/>
            <person name="Shue B.C."/>
            <person name="Siden-Kiamos I."/>
            <person name="Simpson M."/>
            <person name="Skupski M.P."/>
            <person name="Smith T.J."/>
            <person name="Spier E."/>
            <person name="Spradling A.C."/>
            <person name="Stapleton M."/>
            <person name="Strong R."/>
            <person name="Sun E."/>
            <person name="Svirskas R."/>
            <person name="Tector C."/>
            <person name="Turner R."/>
            <person name="Venter E."/>
            <person name="Wang A.H."/>
            <person name="Wang X."/>
            <person name="Wang Z.-Y."/>
            <person name="Wassarman D.A."/>
            <person name="Weinstock G.M."/>
            <person name="Weissenbach J."/>
            <person name="Williams S.M."/>
            <person name="Woodage T."/>
            <person name="Worley K.C."/>
            <person name="Wu D."/>
            <person name="Yang S."/>
            <person name="Yao Q.A."/>
            <person name="Ye J."/>
            <person name="Yeh R.-F."/>
            <person name="Zaveri J.S."/>
            <person name="Zhan M."/>
            <person name="Zhang G."/>
            <person name="Zhao Q."/>
            <person name="Zheng L."/>
            <person name="Zheng X.H."/>
            <person name="Zhong F.N."/>
            <person name="Zhong W."/>
            <person name="Zhou X."/>
            <person name="Zhu S.C."/>
            <person name="Zhu X."/>
            <person name="Smith H.O."/>
            <person name="Gibbs R.A."/>
            <person name="Myers E.W."/>
            <person name="Rubin G.M."/>
            <person name="Venter J.C."/>
        </authorList>
    </citation>
    <scope>NUCLEOTIDE SEQUENCE [LARGE SCALE GENOMIC DNA]</scope>
    <source>
        <strain>Berkeley</strain>
    </source>
</reference>
<reference key="3">
    <citation type="journal article" date="2002" name="Genome Biol.">
        <title>Annotation of the Drosophila melanogaster euchromatic genome: a systematic review.</title>
        <authorList>
            <person name="Misra S."/>
            <person name="Crosby M.A."/>
            <person name="Mungall C.J."/>
            <person name="Matthews B.B."/>
            <person name="Campbell K.S."/>
            <person name="Hradecky P."/>
            <person name="Huang Y."/>
            <person name="Kaminker J.S."/>
            <person name="Millburn G.H."/>
            <person name="Prochnik S.E."/>
            <person name="Smith C.D."/>
            <person name="Tupy J.L."/>
            <person name="Whitfield E.J."/>
            <person name="Bayraktaroglu L."/>
            <person name="Berman B.P."/>
            <person name="Bettencourt B.R."/>
            <person name="Celniker S.E."/>
            <person name="de Grey A.D.N.J."/>
            <person name="Drysdale R.A."/>
            <person name="Harris N.L."/>
            <person name="Richter J."/>
            <person name="Russo S."/>
            <person name="Schroeder A.J."/>
            <person name="Shu S.Q."/>
            <person name="Stapleton M."/>
            <person name="Yamada C."/>
            <person name="Ashburner M."/>
            <person name="Gelbart W.M."/>
            <person name="Rubin G.M."/>
            <person name="Lewis S.E."/>
        </authorList>
    </citation>
    <scope>GENOME REANNOTATION</scope>
    <scope>ALTERNATIVE SPLICING</scope>
    <source>
        <strain>Berkeley</strain>
    </source>
</reference>
<reference evidence="8" key="4">
    <citation type="journal article" date="2000" name="Science">
        <title>A Drosophila complementary DNA resource.</title>
        <authorList>
            <person name="Rubin G.M."/>
            <person name="Hong L."/>
            <person name="Brokstein P."/>
            <person name="Evans-Holm M."/>
            <person name="Frise E."/>
            <person name="Stapleton M."/>
            <person name="Harvey D.A."/>
        </authorList>
    </citation>
    <scope>NUCLEOTIDE SEQUENCE [LARGE SCALE MRNA] (ISOFORM SHORT)</scope>
    <source>
        <strain>Berkeley</strain>
        <tissue>Head</tissue>
    </source>
</reference>
<reference key="5">
    <citation type="journal article" date="2002" name="Genome Biol.">
        <title>A Drosophila full-length cDNA resource.</title>
        <authorList>
            <person name="Stapleton M."/>
            <person name="Carlson J.W."/>
            <person name="Brokstein P."/>
            <person name="Yu C."/>
            <person name="Champe M."/>
            <person name="George R.A."/>
            <person name="Guarin H."/>
            <person name="Kronmiller B."/>
            <person name="Pacleb J.M."/>
            <person name="Park S."/>
            <person name="Wan K.H."/>
            <person name="Rubin G.M."/>
            <person name="Celniker S.E."/>
        </authorList>
    </citation>
    <scope>NUCLEOTIDE SEQUENCE [LARGE SCALE MRNA] (ISOFORM LONG)</scope>
    <source>
        <strain>Berkeley</strain>
        <tissue>Embryo</tissue>
    </source>
</reference>
<reference key="6">
    <citation type="submission" date="2001-07" db="EMBL/GenBank/DDBJ databases">
        <title>Efficient functional dissection of enhancer sequences in Drosophila: a novel P- and hobo-based construct acting as an enhancer-capture element.</title>
        <authorList>
            <person name="Russell C."/>
            <person name="Bartos S."/>
            <person name="Phillips R.G."/>
            <person name="Whittle R."/>
        </authorList>
    </citation>
    <scope>NUCLEOTIDE SEQUENCE [GENOMIC DNA] OF 22-99</scope>
</reference>
<reference key="7">
    <citation type="journal article" date="2003" name="EMBO Rep.">
        <title>Fly and mammalian lipid phosphate phosphatase isoforms differ in activity both in vitro and in vivo.</title>
        <authorList>
            <person name="Burnett C."/>
            <person name="Howard K."/>
        </authorList>
    </citation>
    <scope>FUNCTION</scope>
</reference>
<reference key="8">
    <citation type="journal article" date="2004" name="BMC Biochem.">
        <title>Lipid phosphate phosphatases dimerise, but this interaction is not required for in vivo activity.</title>
        <authorList>
            <person name="Burnett C."/>
            <person name="Makridou P."/>
            <person name="Hewlett L."/>
            <person name="Howard K."/>
        </authorList>
    </citation>
    <scope>SUBUNIT</scope>
    <scope>MUTAGENESIS OF ASP-327</scope>
</reference>
<sequence>MPAVKIIMSTETSASETTPLRRSENETPDHKELAQSNSNSRQTTVNSNNNNYSNSVQVRLQEQDRDSDSEQQQHTATITMDTNKRILCRVGLDVLILLCAGFPILLFFLLGEPYKRGFFCDDESLKHPFHDSTVRNWMLYFIGAVIPVGVIFIVEVIISQNKAKQDNGNATSRRYVFMNYELPDWMIECYKKIGIYAFGAVLSQLTTDIAKYSIGRLRPHFIAVCQPQMADGSTCDDAINAGKYIQEFTCKGVGSSARMLKEMRLSFPSGHSSFTFFAMVYLALYLQARMTWRGSKLLRHLLQFLFIMVAWYTALSRVSDYKHHWSDVLAGSLIGSISALVVANYVSDLFQKPNTKPYLARTVQDMNASPAQAITITTN</sequence>
<accession>Q9V576</accession>
<accession>P91661</accession>
<accession>Q8MKU5</accession>
<accession>Q8WT60</accession>
<accession>Q9U9Y7</accession>
<gene>
    <name type="primary">wun</name>
    <name type="ORF">CG8804</name>
</gene>
<organism>
    <name type="scientific">Drosophila melanogaster</name>
    <name type="common">Fruit fly</name>
    <dbReference type="NCBI Taxonomy" id="7227"/>
    <lineage>
        <taxon>Eukaryota</taxon>
        <taxon>Metazoa</taxon>
        <taxon>Ecdysozoa</taxon>
        <taxon>Arthropoda</taxon>
        <taxon>Hexapoda</taxon>
        <taxon>Insecta</taxon>
        <taxon>Pterygota</taxon>
        <taxon>Neoptera</taxon>
        <taxon>Endopterygota</taxon>
        <taxon>Diptera</taxon>
        <taxon>Brachycera</taxon>
        <taxon>Muscomorpha</taxon>
        <taxon>Ephydroidea</taxon>
        <taxon>Drosophilidae</taxon>
        <taxon>Drosophila</taxon>
        <taxon>Sophophora</taxon>
    </lineage>
</organism>
<keyword id="KW-0025">Alternative splicing</keyword>
<keyword id="KW-0217">Developmental protein</keyword>
<keyword id="KW-0325">Glycoprotein</keyword>
<keyword id="KW-0378">Hydrolase</keyword>
<keyword id="KW-0472">Membrane</keyword>
<keyword id="KW-1185">Reference proteome</keyword>
<keyword id="KW-0812">Transmembrane</keyword>
<keyword id="KW-1133">Transmembrane helix</keyword>
<feature type="chain" id="PRO_0000220917" description="Putative phosphatidate phosphatase">
    <location>
        <begin position="1"/>
        <end position="379"/>
    </location>
</feature>
<feature type="transmembrane region" description="Helical" evidence="1">
    <location>
        <begin position="90"/>
        <end position="110"/>
    </location>
</feature>
<feature type="transmembrane region" description="Helical" evidence="1">
    <location>
        <begin position="138"/>
        <end position="158"/>
    </location>
</feature>
<feature type="transmembrane region" description="Helical" evidence="1">
    <location>
        <begin position="266"/>
        <end position="286"/>
    </location>
</feature>
<feature type="transmembrane region" description="Helical" evidence="1">
    <location>
        <begin position="330"/>
        <end position="350"/>
    </location>
</feature>
<feature type="region of interest" description="Disordered" evidence="2">
    <location>
        <begin position="1"/>
        <end position="53"/>
    </location>
</feature>
<feature type="compositionally biased region" description="Polar residues" evidence="2">
    <location>
        <begin position="9"/>
        <end position="18"/>
    </location>
</feature>
<feature type="compositionally biased region" description="Basic and acidic residues" evidence="2">
    <location>
        <begin position="19"/>
        <end position="33"/>
    </location>
</feature>
<feature type="compositionally biased region" description="Low complexity" evidence="2">
    <location>
        <begin position="35"/>
        <end position="53"/>
    </location>
</feature>
<feature type="glycosylation site" description="N-linked (GlcNAc...) asparagine" evidence="1">
    <location>
        <position position="51"/>
    </location>
</feature>
<feature type="glycosylation site" description="N-linked (GlcNAc...) asparagine" evidence="1">
    <location>
        <position position="169"/>
    </location>
</feature>
<feature type="splice variant" id="VSP_005084" description="In isoform Short." evidence="6 7">
    <location>
        <begin position="1"/>
        <end position="79"/>
    </location>
</feature>
<feature type="mutagenesis site" description="Loss of catalytic activity and dimerization." evidence="4">
    <original>D</original>
    <variation>T</variation>
    <location>
        <position position="327"/>
    </location>
</feature>
<feature type="sequence conflict" description="In Ref. 4; AAC47449." evidence="8" ref="4">
    <original>F</original>
    <variation>L</variation>
    <location>
        <position position="152"/>
    </location>
</feature>
<feature type="sequence conflict" description="In Ref. 4; AAC47449." evidence="8" ref="4">
    <original>A</original>
    <variation>G</variation>
    <location>
        <position position="360"/>
    </location>
</feature>
<name>WUN_DROME</name>
<comment type="function">
    <text evidence="3 5">Responsible for guiding the germ cells early in the process of migration from the lumen of the developing gut towards the overlying mesoderm, where the germ cells enter the gonads. May be involved in lipid metabolism.</text>
</comment>
<comment type="catalytic activity">
    <reaction>
        <text>a 1,2-diacyl-sn-glycero-3-phosphate + H2O = a 1,2-diacyl-sn-glycerol + phosphate</text>
        <dbReference type="Rhea" id="RHEA:27429"/>
        <dbReference type="ChEBI" id="CHEBI:15377"/>
        <dbReference type="ChEBI" id="CHEBI:17815"/>
        <dbReference type="ChEBI" id="CHEBI:43474"/>
        <dbReference type="ChEBI" id="CHEBI:58608"/>
        <dbReference type="EC" id="3.1.3.4"/>
    </reaction>
</comment>
<comment type="subunit">
    <text evidence="4">Homodimer. This complex seems not to be involved in substrate recognition, it may confer only structural or functional stability.</text>
</comment>
<comment type="subcellular location">
    <subcellularLocation>
        <location evidence="8">Membrane</location>
        <topology evidence="8">Multi-pass membrane protein</topology>
    </subcellularLocation>
</comment>
<comment type="alternative products">
    <event type="alternative splicing"/>
    <isoform>
        <id>Q9V576-1</id>
        <name>Long</name>
        <sequence type="displayed"/>
    </isoform>
    <isoform>
        <id>Q9V576-2</id>
        <name>Short</name>
        <sequence type="described" ref="VSP_005084"/>
    </isoform>
</comment>
<comment type="tissue specificity">
    <text evidence="5">Expressed in embryonic gut in a pattern that guides germ cells towards mesoderm (initially in hindgut and then on lower side of gut). During extended germ band stage, expressed in ectoderm as a medial band throughout the trunk.</text>
</comment>
<comment type="similarity">
    <text evidence="8">Belongs to the PA-phosphatase related phosphoesterase family.</text>
</comment>
<proteinExistence type="evidence at protein level"/>
<dbReference type="EC" id="3.1.3.4"/>
<dbReference type="EMBL" id="U73822">
    <property type="protein sequence ID" value="AAC47449.1"/>
    <property type="molecule type" value="mRNA"/>
</dbReference>
<dbReference type="EMBL" id="AE013599">
    <property type="protein sequence ID" value="AAF58942.2"/>
    <property type="molecule type" value="Genomic_DNA"/>
</dbReference>
<dbReference type="EMBL" id="AE013599">
    <property type="protein sequence ID" value="AAM71066.1"/>
    <property type="molecule type" value="Genomic_DNA"/>
</dbReference>
<dbReference type="EMBL" id="AF145595">
    <property type="protein sequence ID" value="AAD38570.1"/>
    <property type="molecule type" value="mRNA"/>
</dbReference>
<dbReference type="EMBL" id="BT001729">
    <property type="protein sequence ID" value="AAN71484.1"/>
    <property type="molecule type" value="mRNA"/>
</dbReference>
<dbReference type="EMBL" id="AY046533">
    <property type="protein sequence ID" value="AAL34392.1"/>
    <property type="molecule type" value="Genomic_DNA"/>
</dbReference>
<dbReference type="RefSeq" id="NP_477193.1">
    <molecule id="Q9V576-2"/>
    <property type="nucleotide sequence ID" value="NM_057845.5"/>
</dbReference>
<dbReference type="RefSeq" id="NP_724787.1">
    <molecule id="Q9V576-1"/>
    <property type="nucleotide sequence ID" value="NM_165674.3"/>
</dbReference>
<dbReference type="BioGRID" id="61798">
    <property type="interactions" value="8"/>
</dbReference>
<dbReference type="FunCoup" id="Q9V576">
    <property type="interactions" value="181"/>
</dbReference>
<dbReference type="IntAct" id="Q9V576">
    <property type="interactions" value="1"/>
</dbReference>
<dbReference type="STRING" id="7227.FBpp0087635"/>
<dbReference type="TCDB" id="1.H.2.1.1">
    <property type="family name" value="the invertebrate pmp22-claudin (claudin2) family"/>
</dbReference>
<dbReference type="GlyCosmos" id="Q9V576">
    <property type="glycosylation" value="2 sites, No reported glycans"/>
</dbReference>
<dbReference type="GlyGen" id="Q9V576">
    <property type="glycosylation" value="2 sites"/>
</dbReference>
<dbReference type="PaxDb" id="7227-FBpp0087635"/>
<dbReference type="DNASU" id="35966"/>
<dbReference type="EnsemblMetazoa" id="FBtr0088552">
    <molecule id="Q9V576-1"/>
    <property type="protein sequence ID" value="FBpp0087635"/>
    <property type="gene ID" value="FBgn0016078"/>
</dbReference>
<dbReference type="EnsemblMetazoa" id="FBtr0088553">
    <molecule id="Q9V576-2"/>
    <property type="protein sequence ID" value="FBpp0087636"/>
    <property type="gene ID" value="FBgn0016078"/>
</dbReference>
<dbReference type="GeneID" id="35966"/>
<dbReference type="KEGG" id="dme:Dmel_CG8804"/>
<dbReference type="UCSC" id="CG8804-RA">
    <molecule id="Q9V576-1"/>
    <property type="organism name" value="d. melanogaster"/>
</dbReference>
<dbReference type="AGR" id="FB:FBgn0016078"/>
<dbReference type="CTD" id="35966"/>
<dbReference type="FlyBase" id="FBgn0016078">
    <property type="gene designation" value="wun"/>
</dbReference>
<dbReference type="VEuPathDB" id="VectorBase:FBgn0016078"/>
<dbReference type="eggNOG" id="KOG3030">
    <property type="taxonomic scope" value="Eukaryota"/>
</dbReference>
<dbReference type="GeneTree" id="ENSGT00940000167256"/>
<dbReference type="InParanoid" id="Q9V576"/>
<dbReference type="OMA" id="CCVGFPI"/>
<dbReference type="OrthoDB" id="8907274at2759"/>
<dbReference type="PhylomeDB" id="Q9V576"/>
<dbReference type="Reactome" id="R-DME-9845614">
    <property type="pathway name" value="Sphingolipid catabolism"/>
</dbReference>
<dbReference type="BioGRID-ORCS" id="35966">
    <property type="hits" value="0 hits in 3 CRISPR screens"/>
</dbReference>
<dbReference type="GenomeRNAi" id="35966"/>
<dbReference type="PRO" id="PR:Q9V576"/>
<dbReference type="Proteomes" id="UP000000803">
    <property type="component" value="Chromosome 2R"/>
</dbReference>
<dbReference type="Bgee" id="FBgn0016078">
    <property type="expression patterns" value="Expressed in reticular neuropil associated glial cell (Drosophila) in brain and 209 other cell types or tissues"/>
</dbReference>
<dbReference type="ExpressionAtlas" id="Q9V576">
    <property type="expression patterns" value="baseline and differential"/>
</dbReference>
<dbReference type="GO" id="GO:0045177">
    <property type="term" value="C:apical part of cell"/>
    <property type="evidence" value="ECO:0000314"/>
    <property type="project" value="FlyBase"/>
</dbReference>
<dbReference type="GO" id="GO:0016328">
    <property type="term" value="C:lateral plasma membrane"/>
    <property type="evidence" value="ECO:0000314"/>
    <property type="project" value="FlyBase"/>
</dbReference>
<dbReference type="GO" id="GO:0005886">
    <property type="term" value="C:plasma membrane"/>
    <property type="evidence" value="ECO:0000318"/>
    <property type="project" value="GO_Central"/>
</dbReference>
<dbReference type="GO" id="GO:0005918">
    <property type="term" value="C:septate junction"/>
    <property type="evidence" value="ECO:0000314"/>
    <property type="project" value="FlyBase"/>
</dbReference>
<dbReference type="GO" id="GO:0016791">
    <property type="term" value="F:phosphatase activity"/>
    <property type="evidence" value="ECO:0000314"/>
    <property type="project" value="FlyBase"/>
</dbReference>
<dbReference type="GO" id="GO:0008195">
    <property type="term" value="F:phosphatidate phosphatase activity"/>
    <property type="evidence" value="ECO:0000318"/>
    <property type="project" value="GO_Central"/>
</dbReference>
<dbReference type="GO" id="GO:0050829">
    <property type="term" value="P:defense response to Gram-negative bacterium"/>
    <property type="evidence" value="ECO:0007001"/>
    <property type="project" value="FlyBase"/>
</dbReference>
<dbReference type="GO" id="GO:0035234">
    <property type="term" value="P:ectopic germ cell programmed cell death"/>
    <property type="evidence" value="ECO:0000304"/>
    <property type="project" value="FlyBase"/>
</dbReference>
<dbReference type="GO" id="GO:0030703">
    <property type="term" value="P:eggshell formation"/>
    <property type="evidence" value="ECO:0000315"/>
    <property type="project" value="FlyBase"/>
</dbReference>
<dbReference type="GO" id="GO:0008354">
    <property type="term" value="P:germ cell migration"/>
    <property type="evidence" value="ECO:0000315"/>
    <property type="project" value="FlyBase"/>
</dbReference>
<dbReference type="GO" id="GO:0035233">
    <property type="term" value="P:germ cell repulsion"/>
    <property type="evidence" value="ECO:0000315"/>
    <property type="project" value="FlyBase"/>
</dbReference>
<dbReference type="GO" id="GO:0045824">
    <property type="term" value="P:negative regulation of innate immune response"/>
    <property type="evidence" value="ECO:0007001"/>
    <property type="project" value="FlyBase"/>
</dbReference>
<dbReference type="GO" id="GO:0007424">
    <property type="term" value="P:open tracheal system development"/>
    <property type="evidence" value="ECO:0000315"/>
    <property type="project" value="FlyBase"/>
</dbReference>
<dbReference type="GO" id="GO:0046839">
    <property type="term" value="P:phospholipid dephosphorylation"/>
    <property type="evidence" value="ECO:0000318"/>
    <property type="project" value="GO_Central"/>
</dbReference>
<dbReference type="GO" id="GO:0006644">
    <property type="term" value="P:phospholipid metabolic process"/>
    <property type="evidence" value="ECO:0000318"/>
    <property type="project" value="GO_Central"/>
</dbReference>
<dbReference type="GO" id="GO:0019991">
    <property type="term" value="P:septate junction assembly"/>
    <property type="evidence" value="ECO:0000315"/>
    <property type="project" value="FlyBase"/>
</dbReference>
<dbReference type="GO" id="GO:0007165">
    <property type="term" value="P:signal transduction"/>
    <property type="evidence" value="ECO:0000318"/>
    <property type="project" value="GO_Central"/>
</dbReference>
<dbReference type="CDD" id="cd03384">
    <property type="entry name" value="PAP2_wunen"/>
    <property type="match status" value="1"/>
</dbReference>
<dbReference type="FunFam" id="1.20.144.10:FF:000036">
    <property type="entry name" value="Putative phosphatidate phosphatase"/>
    <property type="match status" value="1"/>
</dbReference>
<dbReference type="Gene3D" id="1.20.144.10">
    <property type="entry name" value="Phosphatidic acid phosphatase type 2/haloperoxidase"/>
    <property type="match status" value="1"/>
</dbReference>
<dbReference type="InterPro" id="IPR036938">
    <property type="entry name" value="P_Acid_Pase_2/haloperoxi_sf"/>
</dbReference>
<dbReference type="InterPro" id="IPR000326">
    <property type="entry name" value="P_Acid_Pase_2/haloperoxidase"/>
</dbReference>
<dbReference type="InterPro" id="IPR043216">
    <property type="entry name" value="PA_PP_rel"/>
</dbReference>
<dbReference type="PANTHER" id="PTHR10165:SF197">
    <property type="entry name" value="FI04477P-RELATED"/>
    <property type="match status" value="1"/>
</dbReference>
<dbReference type="PANTHER" id="PTHR10165">
    <property type="entry name" value="LIPID PHOSPHATE PHOSPHATASE"/>
    <property type="match status" value="1"/>
</dbReference>
<dbReference type="Pfam" id="PF01569">
    <property type="entry name" value="PAP2"/>
    <property type="match status" value="1"/>
</dbReference>
<dbReference type="SMART" id="SM00014">
    <property type="entry name" value="acidPPc"/>
    <property type="match status" value="1"/>
</dbReference>
<dbReference type="SUPFAM" id="SSF48317">
    <property type="entry name" value="Acid phosphatase/Vanadium-dependent haloperoxidase"/>
    <property type="match status" value="1"/>
</dbReference>
<evidence type="ECO:0000255" key="1"/>
<evidence type="ECO:0000256" key="2">
    <source>
        <dbReference type="SAM" id="MobiDB-lite"/>
    </source>
</evidence>
<evidence type="ECO:0000269" key="3">
    <source>
    </source>
</evidence>
<evidence type="ECO:0000269" key="4">
    <source>
    </source>
</evidence>
<evidence type="ECO:0000269" key="5">
    <source>
    </source>
</evidence>
<evidence type="ECO:0000303" key="6">
    <source>
    </source>
</evidence>
<evidence type="ECO:0000303" key="7">
    <source>
    </source>
</evidence>
<evidence type="ECO:0000305" key="8"/>